<organism>
    <name type="scientific">Archaeoglobus fulgidus (strain ATCC 49558 / DSM 4304 / JCM 9628 / NBRC 100126 / VC-16)</name>
    <dbReference type="NCBI Taxonomy" id="224325"/>
    <lineage>
        <taxon>Archaea</taxon>
        <taxon>Methanobacteriati</taxon>
        <taxon>Methanobacteriota</taxon>
        <taxon>Archaeoglobi</taxon>
        <taxon>Archaeoglobales</taxon>
        <taxon>Archaeoglobaceae</taxon>
        <taxon>Archaeoglobus</taxon>
    </lineage>
</organism>
<dbReference type="EMBL" id="AE000782">
    <property type="protein sequence ID" value="AAB89503.1"/>
    <property type="molecule type" value="Genomic_DNA"/>
</dbReference>
<dbReference type="PIR" id="A69468">
    <property type="entry name" value="A69468"/>
</dbReference>
<dbReference type="RefSeq" id="WP_010879242.1">
    <property type="nucleotide sequence ID" value="NC_000917.1"/>
</dbReference>
<dbReference type="SMR" id="O28528"/>
<dbReference type="STRING" id="224325.AF_1746"/>
<dbReference type="TCDB" id="1.A.11.2.7">
    <property type="family name" value="the ammonium transporter channel (amt) family"/>
</dbReference>
<dbReference type="PaxDb" id="224325-AF_1746"/>
<dbReference type="EnsemblBacteria" id="AAB89503">
    <property type="protein sequence ID" value="AAB89503"/>
    <property type="gene ID" value="AF_1746"/>
</dbReference>
<dbReference type="KEGG" id="afu:AF_1746"/>
<dbReference type="eggNOG" id="arCOG04397">
    <property type="taxonomic scope" value="Archaea"/>
</dbReference>
<dbReference type="HOGENOM" id="CLU_000445_33_1_2"/>
<dbReference type="PhylomeDB" id="O28528"/>
<dbReference type="Proteomes" id="UP000002199">
    <property type="component" value="Chromosome"/>
</dbReference>
<dbReference type="GO" id="GO:0005886">
    <property type="term" value="C:plasma membrane"/>
    <property type="evidence" value="ECO:0007669"/>
    <property type="project" value="UniProtKB-SubCell"/>
</dbReference>
<dbReference type="GO" id="GO:0008519">
    <property type="term" value="F:ammonium channel activity"/>
    <property type="evidence" value="ECO:0007669"/>
    <property type="project" value="InterPro"/>
</dbReference>
<dbReference type="GO" id="GO:0097272">
    <property type="term" value="P:ammonium homeostasis"/>
    <property type="evidence" value="ECO:0007669"/>
    <property type="project" value="TreeGrafter"/>
</dbReference>
<dbReference type="Gene3D" id="1.10.3430.10">
    <property type="entry name" value="Ammonium transporter AmtB like domains"/>
    <property type="match status" value="1"/>
</dbReference>
<dbReference type="InterPro" id="IPR029020">
    <property type="entry name" value="Ammonium/urea_transptr"/>
</dbReference>
<dbReference type="InterPro" id="IPR001905">
    <property type="entry name" value="Ammonium_transpt"/>
</dbReference>
<dbReference type="InterPro" id="IPR018047">
    <property type="entry name" value="Ammonium_transpt_CS"/>
</dbReference>
<dbReference type="InterPro" id="IPR024041">
    <property type="entry name" value="NH4_transpt_AmtB-like_dom"/>
</dbReference>
<dbReference type="InterPro" id="IPR002229">
    <property type="entry name" value="RhesusRHD"/>
</dbReference>
<dbReference type="NCBIfam" id="TIGR00836">
    <property type="entry name" value="amt"/>
    <property type="match status" value="1"/>
</dbReference>
<dbReference type="PANTHER" id="PTHR11730">
    <property type="entry name" value="AMMONIUM TRANSPORTER"/>
    <property type="match status" value="1"/>
</dbReference>
<dbReference type="PANTHER" id="PTHR11730:SF6">
    <property type="entry name" value="AMMONIUM TRANSPORTER"/>
    <property type="match status" value="1"/>
</dbReference>
<dbReference type="Pfam" id="PF00909">
    <property type="entry name" value="Ammonium_transp"/>
    <property type="match status" value="1"/>
</dbReference>
<dbReference type="PRINTS" id="PR00342">
    <property type="entry name" value="RHESUSRHD"/>
</dbReference>
<dbReference type="SUPFAM" id="SSF111352">
    <property type="entry name" value="Ammonium transporter"/>
    <property type="match status" value="1"/>
</dbReference>
<dbReference type="PROSITE" id="PS01219">
    <property type="entry name" value="AMMONIUM_TRANSP"/>
    <property type="match status" value="1"/>
</dbReference>
<protein>
    <recommendedName>
        <fullName evidence="4">Ammonium transporter Amt2</fullName>
    </recommendedName>
</protein>
<gene>
    <name evidence="4" type="primary">amt2</name>
    <name evidence="5" type="ordered locus">AF_1746</name>
</gene>
<reference key="1">
    <citation type="journal article" date="1997" name="Nature">
        <title>The complete genome sequence of the hyperthermophilic, sulphate-reducing archaeon Archaeoglobus fulgidus.</title>
        <authorList>
            <person name="Klenk H.-P."/>
            <person name="Clayton R.A."/>
            <person name="Tomb J.-F."/>
            <person name="White O."/>
            <person name="Nelson K.E."/>
            <person name="Ketchum K.A."/>
            <person name="Dodson R.J."/>
            <person name="Gwinn M.L."/>
            <person name="Hickey E.K."/>
            <person name="Peterson J.D."/>
            <person name="Richardson D.L."/>
            <person name="Kerlavage A.R."/>
            <person name="Graham D.E."/>
            <person name="Kyrpides N.C."/>
            <person name="Fleischmann R.D."/>
            <person name="Quackenbush J."/>
            <person name="Lee N.H."/>
            <person name="Sutton G.G."/>
            <person name="Gill S.R."/>
            <person name="Kirkness E.F."/>
            <person name="Dougherty B.A."/>
            <person name="McKenney K."/>
            <person name="Adams M.D."/>
            <person name="Loftus B.J."/>
            <person name="Peterson S.N."/>
            <person name="Reich C.I."/>
            <person name="McNeil L.K."/>
            <person name="Badger J.H."/>
            <person name="Glodek A."/>
            <person name="Zhou L."/>
            <person name="Overbeek R."/>
            <person name="Gocayne J.D."/>
            <person name="Weidman J.F."/>
            <person name="McDonald L.A."/>
            <person name="Utterback T.R."/>
            <person name="Cotton M.D."/>
            <person name="Spriggs T."/>
            <person name="Artiach P."/>
            <person name="Kaine B.P."/>
            <person name="Sykes S.M."/>
            <person name="Sadow P.W."/>
            <person name="D'Andrea K.P."/>
            <person name="Bowman C."/>
            <person name="Fujii C."/>
            <person name="Garland S.A."/>
            <person name="Mason T.M."/>
            <person name="Olsen G.J."/>
            <person name="Fraser C.M."/>
            <person name="Smith H.O."/>
            <person name="Woese C.R."/>
            <person name="Venter J.C."/>
        </authorList>
    </citation>
    <scope>NUCLEOTIDE SEQUENCE [LARGE SCALE GENOMIC DNA]</scope>
    <source>
        <strain>ATCC 49558 / DSM 4304 / JCM 9628 / NBRC 100126 / VC-16</strain>
    </source>
</reference>
<sequence>MVGRMCVAVLIVLLLVATAGADPNGAETLKENPELPVDFVWALICGFLVMFMQAGFAMLEAGFSRAKNVANVMMKNLMDFAVGSLAFFAVGFALMMGADWQGIAGTTGWFLAGESYDVSTIELWFFMLVFAATAATIVSGSIAERPKFSVYLVYSAVVSAVIYPIYGHWLWGGGWLSSSEFMVKLGGGYGALDFAGSGVVHALGGYIALAAVMLLGPRLGKYDSDGNPRAIPGHNLAFAVIGTFILWFGWFGFNAGSTLSAHELRVSIIASNTNLAAAAGAVTAMAITWLRNGKPDVGMTCNGAVAGLVAITAPCAWVQPWSSVVIGTIAGFIATYGYWWLEKRGLDDVVGAIPVHGFSGTWGLIALGIFADGSYGLYATESPLVTGLLYGNWGFFIVQLISAIVNFAWAFGTGFALFWILKKVIGIRVSPEEEMLGLDIAEHAAVAYPNFVCTETELPLAMKQGGGR</sequence>
<feature type="chain" id="PRO_0000453006" description="Ammonium transporter Amt2">
    <location>
        <begin position="1"/>
        <end position="468"/>
    </location>
</feature>
<feature type="transmembrane region" description="Helical" evidence="3">
    <location>
        <begin position="1"/>
        <end position="21"/>
    </location>
</feature>
<feature type="transmembrane region" description="Helical" evidence="3">
    <location>
        <begin position="39"/>
        <end position="59"/>
    </location>
</feature>
<feature type="transmembrane region" description="Helical" evidence="3">
    <location>
        <begin position="77"/>
        <end position="97"/>
    </location>
</feature>
<feature type="transmembrane region" description="Helical" evidence="3">
    <location>
        <begin position="123"/>
        <end position="143"/>
    </location>
</feature>
<feature type="transmembrane region" description="Helical" evidence="3">
    <location>
        <begin position="156"/>
        <end position="176"/>
    </location>
</feature>
<feature type="transmembrane region" description="Helical" evidence="3">
    <location>
        <begin position="194"/>
        <end position="214"/>
    </location>
</feature>
<feature type="transmembrane region" description="Helical" evidence="3">
    <location>
        <begin position="236"/>
        <end position="256"/>
    </location>
</feature>
<feature type="transmembrane region" description="Helical" evidence="3">
    <location>
        <begin position="268"/>
        <end position="288"/>
    </location>
</feature>
<feature type="transmembrane region" description="Helical" evidence="3">
    <location>
        <begin position="297"/>
        <end position="317"/>
    </location>
</feature>
<feature type="transmembrane region" description="Helical" evidence="3">
    <location>
        <begin position="321"/>
        <end position="341"/>
    </location>
</feature>
<feature type="transmembrane region" description="Helical" evidence="3">
    <location>
        <begin position="350"/>
        <end position="370"/>
    </location>
</feature>
<feature type="transmembrane region" description="Helical" evidence="3">
    <location>
        <begin position="400"/>
        <end position="420"/>
    </location>
</feature>
<feature type="site" description="Twin-His motif. Important for optimum substrate conductance" evidence="2">
    <location>
        <position position="201"/>
    </location>
</feature>
<feature type="site" description="Twin-His motif. Important for optimum substrate conductance" evidence="2">
    <location>
        <position position="356"/>
    </location>
</feature>
<evidence type="ECO:0000250" key="1">
    <source>
        <dbReference type="UniProtKB" id="O29285"/>
    </source>
</evidence>
<evidence type="ECO:0000250" key="2">
    <source>
        <dbReference type="UniProtKB" id="P69681"/>
    </source>
</evidence>
<evidence type="ECO:0000255" key="3"/>
<evidence type="ECO:0000305" key="4"/>
<evidence type="ECO:0000312" key="5">
    <source>
        <dbReference type="EMBL" id="AAB89503.1"/>
    </source>
</evidence>
<proteinExistence type="inferred from homology"/>
<accession>O28528</accession>
<name>AMT2_ARCFU</name>
<keyword id="KW-0924">Ammonia transport</keyword>
<keyword id="KW-1003">Cell membrane</keyword>
<keyword id="KW-0472">Membrane</keyword>
<keyword id="KW-1185">Reference proteome</keyword>
<keyword id="KW-0812">Transmembrane</keyword>
<keyword id="KW-1133">Transmembrane helix</keyword>
<keyword id="KW-0813">Transport</keyword>
<comment type="function">
    <text evidence="1">Involved in the uptake of ammonium/ammonia (NH(4)(+)/NH(3)). Transport is electrogenic.</text>
</comment>
<comment type="subunit">
    <text evidence="1">Homotrimer.</text>
</comment>
<comment type="subcellular location">
    <subcellularLocation>
        <location evidence="1">Cell membrane</location>
        <topology evidence="3">Multi-pass membrane protein</topology>
    </subcellularLocation>
</comment>
<comment type="similarity">
    <text evidence="4">Belongs to the ammonia transporter channel (TC 1.A.11.2) family.</text>
</comment>